<keyword id="KW-0328">Glycosyltransferase</keyword>
<keyword id="KW-0460">Magnesium</keyword>
<keyword id="KW-0665">Pyrimidine biosynthesis</keyword>
<keyword id="KW-0808">Transferase</keyword>
<gene>
    <name evidence="1" type="primary">pyrE</name>
    <name type="ordered locus">SG3698</name>
</gene>
<dbReference type="EC" id="2.4.2.10" evidence="1"/>
<dbReference type="EMBL" id="AM933173">
    <property type="protein sequence ID" value="CAR39478.1"/>
    <property type="molecule type" value="Genomic_DNA"/>
</dbReference>
<dbReference type="RefSeq" id="WP_000806167.1">
    <property type="nucleotide sequence ID" value="NC_011274.1"/>
</dbReference>
<dbReference type="SMR" id="B5RG81"/>
<dbReference type="KEGG" id="seg:SG3698"/>
<dbReference type="HOGENOM" id="CLU_074878_0_1_6"/>
<dbReference type="UniPathway" id="UPA00070">
    <property type="reaction ID" value="UER00119"/>
</dbReference>
<dbReference type="Proteomes" id="UP000008321">
    <property type="component" value="Chromosome"/>
</dbReference>
<dbReference type="GO" id="GO:0005737">
    <property type="term" value="C:cytoplasm"/>
    <property type="evidence" value="ECO:0007669"/>
    <property type="project" value="TreeGrafter"/>
</dbReference>
<dbReference type="GO" id="GO:0000287">
    <property type="term" value="F:magnesium ion binding"/>
    <property type="evidence" value="ECO:0007669"/>
    <property type="project" value="UniProtKB-UniRule"/>
</dbReference>
<dbReference type="GO" id="GO:0004588">
    <property type="term" value="F:orotate phosphoribosyltransferase activity"/>
    <property type="evidence" value="ECO:0007669"/>
    <property type="project" value="UniProtKB-UniRule"/>
</dbReference>
<dbReference type="GO" id="GO:0006207">
    <property type="term" value="P:'de novo' pyrimidine nucleobase biosynthetic process"/>
    <property type="evidence" value="ECO:0007669"/>
    <property type="project" value="TreeGrafter"/>
</dbReference>
<dbReference type="GO" id="GO:0044205">
    <property type="term" value="P:'de novo' UMP biosynthetic process"/>
    <property type="evidence" value="ECO:0007669"/>
    <property type="project" value="UniProtKB-UniRule"/>
</dbReference>
<dbReference type="GO" id="GO:0046132">
    <property type="term" value="P:pyrimidine ribonucleoside biosynthetic process"/>
    <property type="evidence" value="ECO:0007669"/>
    <property type="project" value="TreeGrafter"/>
</dbReference>
<dbReference type="CDD" id="cd06223">
    <property type="entry name" value="PRTases_typeI"/>
    <property type="match status" value="1"/>
</dbReference>
<dbReference type="FunFam" id="3.40.50.2020:FF:000008">
    <property type="entry name" value="Orotate phosphoribosyltransferase"/>
    <property type="match status" value="1"/>
</dbReference>
<dbReference type="Gene3D" id="3.40.50.2020">
    <property type="match status" value="1"/>
</dbReference>
<dbReference type="HAMAP" id="MF_01208">
    <property type="entry name" value="PyrE"/>
    <property type="match status" value="1"/>
</dbReference>
<dbReference type="InterPro" id="IPR023031">
    <property type="entry name" value="OPRT"/>
</dbReference>
<dbReference type="InterPro" id="IPR004467">
    <property type="entry name" value="Or_phspho_trans_dom"/>
</dbReference>
<dbReference type="InterPro" id="IPR000836">
    <property type="entry name" value="PRibTrfase_dom"/>
</dbReference>
<dbReference type="InterPro" id="IPR029057">
    <property type="entry name" value="PRTase-like"/>
</dbReference>
<dbReference type="NCBIfam" id="TIGR00336">
    <property type="entry name" value="pyrE"/>
    <property type="match status" value="1"/>
</dbReference>
<dbReference type="PANTHER" id="PTHR46683">
    <property type="entry name" value="OROTATE PHOSPHORIBOSYLTRANSFERASE 1-RELATED"/>
    <property type="match status" value="1"/>
</dbReference>
<dbReference type="PANTHER" id="PTHR46683:SF1">
    <property type="entry name" value="OROTATE PHOSPHORIBOSYLTRANSFERASE 1-RELATED"/>
    <property type="match status" value="1"/>
</dbReference>
<dbReference type="Pfam" id="PF00156">
    <property type="entry name" value="Pribosyltran"/>
    <property type="match status" value="1"/>
</dbReference>
<dbReference type="SUPFAM" id="SSF53271">
    <property type="entry name" value="PRTase-like"/>
    <property type="match status" value="1"/>
</dbReference>
<dbReference type="PROSITE" id="PS00103">
    <property type="entry name" value="PUR_PYR_PR_TRANSFER"/>
    <property type="match status" value="1"/>
</dbReference>
<organism>
    <name type="scientific">Salmonella gallinarum (strain 287/91 / NCTC 13346)</name>
    <dbReference type="NCBI Taxonomy" id="550538"/>
    <lineage>
        <taxon>Bacteria</taxon>
        <taxon>Pseudomonadati</taxon>
        <taxon>Pseudomonadota</taxon>
        <taxon>Gammaproteobacteria</taxon>
        <taxon>Enterobacterales</taxon>
        <taxon>Enterobacteriaceae</taxon>
        <taxon>Salmonella</taxon>
    </lineage>
</organism>
<accession>B5RG81</accession>
<proteinExistence type="inferred from homology"/>
<comment type="function">
    <text evidence="1">Catalyzes the transfer of a ribosyl phosphate group from 5-phosphoribose 1-diphosphate to orotate, leading to the formation of orotidine monophosphate (OMP).</text>
</comment>
<comment type="catalytic activity">
    <reaction evidence="1">
        <text>orotidine 5'-phosphate + diphosphate = orotate + 5-phospho-alpha-D-ribose 1-diphosphate</text>
        <dbReference type="Rhea" id="RHEA:10380"/>
        <dbReference type="ChEBI" id="CHEBI:30839"/>
        <dbReference type="ChEBI" id="CHEBI:33019"/>
        <dbReference type="ChEBI" id="CHEBI:57538"/>
        <dbReference type="ChEBI" id="CHEBI:58017"/>
        <dbReference type="EC" id="2.4.2.10"/>
    </reaction>
</comment>
<comment type="cofactor">
    <cofactor evidence="1">
        <name>Mg(2+)</name>
        <dbReference type="ChEBI" id="CHEBI:18420"/>
    </cofactor>
</comment>
<comment type="pathway">
    <text evidence="1">Pyrimidine metabolism; UMP biosynthesis via de novo pathway; UMP from orotate: step 1/2.</text>
</comment>
<comment type="subunit">
    <text evidence="1">Homodimer.</text>
</comment>
<comment type="similarity">
    <text evidence="1">Belongs to the purine/pyrimidine phosphoribosyltransferase family. PyrE subfamily.</text>
</comment>
<protein>
    <recommendedName>
        <fullName evidence="1">Orotate phosphoribosyltransferase</fullName>
        <shortName evidence="1">OPRT</shortName>
        <shortName evidence="1">OPRTase</shortName>
        <ecNumber evidence="1">2.4.2.10</ecNumber>
    </recommendedName>
</protein>
<feature type="chain" id="PRO_1000138827" description="Orotate phosphoribosyltransferase">
    <location>
        <begin position="1"/>
        <end position="213"/>
    </location>
</feature>
<feature type="binding site" description="in other chain" evidence="1">
    <location>
        <position position="26"/>
    </location>
    <ligand>
        <name>5-phospho-alpha-D-ribose 1-diphosphate</name>
        <dbReference type="ChEBI" id="CHEBI:58017"/>
        <note>ligand shared between dimeric partners</note>
    </ligand>
</feature>
<feature type="binding site" evidence="1">
    <location>
        <begin position="34"/>
        <end position="35"/>
    </location>
    <ligand>
        <name>orotate</name>
        <dbReference type="ChEBI" id="CHEBI:30839"/>
    </ligand>
</feature>
<feature type="binding site" description="in other chain" evidence="1">
    <location>
        <begin position="72"/>
        <end position="73"/>
    </location>
    <ligand>
        <name>5-phospho-alpha-D-ribose 1-diphosphate</name>
        <dbReference type="ChEBI" id="CHEBI:58017"/>
        <note>ligand shared between dimeric partners</note>
    </ligand>
</feature>
<feature type="binding site" evidence="1">
    <location>
        <position position="99"/>
    </location>
    <ligand>
        <name>5-phospho-alpha-D-ribose 1-diphosphate</name>
        <dbReference type="ChEBI" id="CHEBI:58017"/>
        <note>ligand shared between dimeric partners</note>
    </ligand>
</feature>
<feature type="binding site" description="in other chain" evidence="1">
    <location>
        <position position="100"/>
    </location>
    <ligand>
        <name>5-phospho-alpha-D-ribose 1-diphosphate</name>
        <dbReference type="ChEBI" id="CHEBI:58017"/>
        <note>ligand shared between dimeric partners</note>
    </ligand>
</feature>
<feature type="binding site" evidence="1">
    <location>
        <position position="103"/>
    </location>
    <ligand>
        <name>5-phospho-alpha-D-ribose 1-diphosphate</name>
        <dbReference type="ChEBI" id="CHEBI:58017"/>
        <note>ligand shared between dimeric partners</note>
    </ligand>
</feature>
<feature type="binding site" evidence="1">
    <location>
        <position position="105"/>
    </location>
    <ligand>
        <name>5-phospho-alpha-D-ribose 1-diphosphate</name>
        <dbReference type="ChEBI" id="CHEBI:58017"/>
        <note>ligand shared between dimeric partners</note>
    </ligand>
</feature>
<feature type="binding site" description="in other chain" evidence="1">
    <location>
        <begin position="124"/>
        <end position="132"/>
    </location>
    <ligand>
        <name>5-phospho-alpha-D-ribose 1-diphosphate</name>
        <dbReference type="ChEBI" id="CHEBI:58017"/>
        <note>ligand shared between dimeric partners</note>
    </ligand>
</feature>
<feature type="binding site" evidence="1">
    <location>
        <position position="128"/>
    </location>
    <ligand>
        <name>orotate</name>
        <dbReference type="ChEBI" id="CHEBI:30839"/>
    </ligand>
</feature>
<feature type="binding site" evidence="1">
    <location>
        <position position="156"/>
    </location>
    <ligand>
        <name>orotate</name>
        <dbReference type="ChEBI" id="CHEBI:30839"/>
    </ligand>
</feature>
<sequence>MKPYQRQFIEFALNKQVLKFGEFTLKSGRKSPYFFNAGLFNTGRDLALLGRFYAEALVDSGIEFDLLFGPAYKGIPIATTTAVALAEHHDKDLPYCFNRKEAKDHGEGGSLVGSALQGRVMLVDDVITAGTAIRESMEIIQAHGATLAGVLISLDRQERGRGEISAIQEVERDYGCKVISIITLKDLIAYLEEKPDMAEHLAAVRAYREEFGV</sequence>
<reference key="1">
    <citation type="journal article" date="2008" name="Genome Res.">
        <title>Comparative genome analysis of Salmonella enteritidis PT4 and Salmonella gallinarum 287/91 provides insights into evolutionary and host adaptation pathways.</title>
        <authorList>
            <person name="Thomson N.R."/>
            <person name="Clayton D.J."/>
            <person name="Windhorst D."/>
            <person name="Vernikos G."/>
            <person name="Davidson S."/>
            <person name="Churcher C."/>
            <person name="Quail M.A."/>
            <person name="Stevens M."/>
            <person name="Jones M.A."/>
            <person name="Watson M."/>
            <person name="Barron A."/>
            <person name="Layton A."/>
            <person name="Pickard D."/>
            <person name="Kingsley R.A."/>
            <person name="Bignell A."/>
            <person name="Clark L."/>
            <person name="Harris B."/>
            <person name="Ormond D."/>
            <person name="Abdellah Z."/>
            <person name="Brooks K."/>
            <person name="Cherevach I."/>
            <person name="Chillingworth T."/>
            <person name="Woodward J."/>
            <person name="Norberczak H."/>
            <person name="Lord A."/>
            <person name="Arrowsmith C."/>
            <person name="Jagels K."/>
            <person name="Moule S."/>
            <person name="Mungall K."/>
            <person name="Saunders M."/>
            <person name="Whitehead S."/>
            <person name="Chabalgoity J.A."/>
            <person name="Maskell D."/>
            <person name="Humphreys T."/>
            <person name="Roberts M."/>
            <person name="Barrow P.A."/>
            <person name="Dougan G."/>
            <person name="Parkhill J."/>
        </authorList>
    </citation>
    <scope>NUCLEOTIDE SEQUENCE [LARGE SCALE GENOMIC DNA]</scope>
    <source>
        <strain>287/91 / NCTC 13346</strain>
    </source>
</reference>
<evidence type="ECO:0000255" key="1">
    <source>
        <dbReference type="HAMAP-Rule" id="MF_01208"/>
    </source>
</evidence>
<name>PYRE_SALG2</name>